<evidence type="ECO:0000255" key="1">
    <source>
        <dbReference type="HAMAP-Rule" id="MF_00815"/>
    </source>
</evidence>
<feature type="chain" id="PRO_1000134212" description="ATP synthase gamma chain">
    <location>
        <begin position="1"/>
        <end position="287"/>
    </location>
</feature>
<dbReference type="EMBL" id="AM743169">
    <property type="protein sequence ID" value="CAQ47503.1"/>
    <property type="molecule type" value="Genomic_DNA"/>
</dbReference>
<dbReference type="RefSeq" id="WP_005411129.1">
    <property type="nucleotide sequence ID" value="NC_010943.1"/>
</dbReference>
<dbReference type="SMR" id="B2FHY9"/>
<dbReference type="EnsemblBacteria" id="CAQ47503">
    <property type="protein sequence ID" value="CAQ47503"/>
    <property type="gene ID" value="Smlt4112"/>
</dbReference>
<dbReference type="GeneID" id="97262750"/>
<dbReference type="KEGG" id="sml:Smlt4112"/>
<dbReference type="eggNOG" id="COG0224">
    <property type="taxonomic scope" value="Bacteria"/>
</dbReference>
<dbReference type="HOGENOM" id="CLU_050669_0_1_6"/>
<dbReference type="Proteomes" id="UP000008840">
    <property type="component" value="Chromosome"/>
</dbReference>
<dbReference type="GO" id="GO:0005886">
    <property type="term" value="C:plasma membrane"/>
    <property type="evidence" value="ECO:0007669"/>
    <property type="project" value="UniProtKB-SubCell"/>
</dbReference>
<dbReference type="GO" id="GO:0045259">
    <property type="term" value="C:proton-transporting ATP synthase complex"/>
    <property type="evidence" value="ECO:0007669"/>
    <property type="project" value="UniProtKB-KW"/>
</dbReference>
<dbReference type="GO" id="GO:0005524">
    <property type="term" value="F:ATP binding"/>
    <property type="evidence" value="ECO:0007669"/>
    <property type="project" value="UniProtKB-UniRule"/>
</dbReference>
<dbReference type="GO" id="GO:0046933">
    <property type="term" value="F:proton-transporting ATP synthase activity, rotational mechanism"/>
    <property type="evidence" value="ECO:0007669"/>
    <property type="project" value="UniProtKB-UniRule"/>
</dbReference>
<dbReference type="GO" id="GO:0042777">
    <property type="term" value="P:proton motive force-driven plasma membrane ATP synthesis"/>
    <property type="evidence" value="ECO:0007669"/>
    <property type="project" value="UniProtKB-UniRule"/>
</dbReference>
<dbReference type="CDD" id="cd12151">
    <property type="entry name" value="F1-ATPase_gamma"/>
    <property type="match status" value="1"/>
</dbReference>
<dbReference type="FunFam" id="1.10.287.80:FF:000005">
    <property type="entry name" value="ATP synthase gamma chain"/>
    <property type="match status" value="1"/>
</dbReference>
<dbReference type="FunFam" id="3.40.1380.10:FF:000007">
    <property type="entry name" value="ATP synthase gamma chain"/>
    <property type="match status" value="1"/>
</dbReference>
<dbReference type="Gene3D" id="3.40.1380.10">
    <property type="match status" value="1"/>
</dbReference>
<dbReference type="Gene3D" id="1.10.287.80">
    <property type="entry name" value="ATP synthase, gamma subunit, helix hairpin domain"/>
    <property type="match status" value="2"/>
</dbReference>
<dbReference type="HAMAP" id="MF_00815">
    <property type="entry name" value="ATP_synth_gamma_bact"/>
    <property type="match status" value="1"/>
</dbReference>
<dbReference type="InterPro" id="IPR035968">
    <property type="entry name" value="ATP_synth_F1_ATPase_gsu"/>
</dbReference>
<dbReference type="InterPro" id="IPR000131">
    <property type="entry name" value="ATP_synth_F1_gsu"/>
</dbReference>
<dbReference type="InterPro" id="IPR023632">
    <property type="entry name" value="ATP_synth_F1_gsu_CS"/>
</dbReference>
<dbReference type="NCBIfam" id="TIGR01146">
    <property type="entry name" value="ATPsyn_F1gamma"/>
    <property type="match status" value="1"/>
</dbReference>
<dbReference type="NCBIfam" id="NF004144">
    <property type="entry name" value="PRK05621.1-1"/>
    <property type="match status" value="1"/>
</dbReference>
<dbReference type="PANTHER" id="PTHR11693">
    <property type="entry name" value="ATP SYNTHASE GAMMA CHAIN"/>
    <property type="match status" value="1"/>
</dbReference>
<dbReference type="PANTHER" id="PTHR11693:SF22">
    <property type="entry name" value="ATP SYNTHASE SUBUNIT GAMMA, MITOCHONDRIAL"/>
    <property type="match status" value="1"/>
</dbReference>
<dbReference type="Pfam" id="PF00231">
    <property type="entry name" value="ATP-synt"/>
    <property type="match status" value="1"/>
</dbReference>
<dbReference type="PRINTS" id="PR00126">
    <property type="entry name" value="ATPASEGAMMA"/>
</dbReference>
<dbReference type="SUPFAM" id="SSF52943">
    <property type="entry name" value="ATP synthase (F1-ATPase), gamma subunit"/>
    <property type="match status" value="1"/>
</dbReference>
<dbReference type="PROSITE" id="PS00153">
    <property type="entry name" value="ATPASE_GAMMA"/>
    <property type="match status" value="1"/>
</dbReference>
<comment type="function">
    <text evidence="1">Produces ATP from ADP in the presence of a proton gradient across the membrane. The gamma chain is believed to be important in regulating ATPase activity and the flow of protons through the CF(0) complex.</text>
</comment>
<comment type="subunit">
    <text evidence="1">F-type ATPases have 2 components, CF(1) - the catalytic core - and CF(0) - the membrane proton channel. CF(1) has five subunits: alpha(3), beta(3), gamma(1), delta(1), epsilon(1). CF(0) has three main subunits: a, b and c.</text>
</comment>
<comment type="subcellular location">
    <subcellularLocation>
        <location evidence="1">Cell inner membrane</location>
        <topology evidence="1">Peripheral membrane protein</topology>
    </subcellularLocation>
</comment>
<comment type="similarity">
    <text evidence="1">Belongs to the ATPase gamma chain family.</text>
</comment>
<name>ATPG_STRMK</name>
<protein>
    <recommendedName>
        <fullName evidence="1">ATP synthase gamma chain</fullName>
    </recommendedName>
    <alternativeName>
        <fullName evidence="1">ATP synthase F1 sector gamma subunit</fullName>
    </alternativeName>
    <alternativeName>
        <fullName evidence="1">F-ATPase gamma subunit</fullName>
    </alternativeName>
</protein>
<reference key="1">
    <citation type="journal article" date="2008" name="Genome Biol.">
        <title>The complete genome, comparative and functional analysis of Stenotrophomonas maltophilia reveals an organism heavily shielded by drug resistance determinants.</title>
        <authorList>
            <person name="Crossman L.C."/>
            <person name="Gould V.C."/>
            <person name="Dow J.M."/>
            <person name="Vernikos G.S."/>
            <person name="Okazaki A."/>
            <person name="Sebaihia M."/>
            <person name="Saunders D."/>
            <person name="Arrowsmith C."/>
            <person name="Carver T."/>
            <person name="Peters N."/>
            <person name="Adlem E."/>
            <person name="Kerhornou A."/>
            <person name="Lord A."/>
            <person name="Murphy L."/>
            <person name="Seeger K."/>
            <person name="Squares R."/>
            <person name="Rutter S."/>
            <person name="Quail M.A."/>
            <person name="Rajandream M.A."/>
            <person name="Harris D."/>
            <person name="Churcher C."/>
            <person name="Bentley S.D."/>
            <person name="Parkhill J."/>
            <person name="Thomson N.R."/>
            <person name="Avison M.B."/>
        </authorList>
    </citation>
    <scope>NUCLEOTIDE SEQUENCE [LARGE SCALE GENOMIC DNA]</scope>
    <source>
        <strain>K279a</strain>
    </source>
</reference>
<proteinExistence type="inferred from homology"/>
<sequence length="287" mass="31916">MASGREIKTKIKSVQNTRKVTRALEMVSASKIRKAQDRMKTSRPYAQAMKQVIGHLAQASTDYQHPFLVEREQVKRVGFIVISSDRGLAGGLNNNLFRKMLGEAKAWQDKGAEVDLVTIGQKASTFFRRVKVNMVGSVTHIGDVPKLESLIGVIKVMLDAFTEGKIDRVYLVYNRFVNTMVQKASFDQLLPLPPAEKQVAHHDWDYLYEPDAATVLEHVMTRYIESLVYQALLENVASEHAARMVAMKAASDNANKLIGTLQLVYNKARQAAITQEISEIVGGAAAV</sequence>
<gene>
    <name evidence="1" type="primary">atpG</name>
    <name type="ordered locus">Smlt4112</name>
</gene>
<accession>B2FHY9</accession>
<keyword id="KW-0066">ATP synthesis</keyword>
<keyword id="KW-0997">Cell inner membrane</keyword>
<keyword id="KW-1003">Cell membrane</keyword>
<keyword id="KW-0139">CF(1)</keyword>
<keyword id="KW-0375">Hydrogen ion transport</keyword>
<keyword id="KW-0406">Ion transport</keyword>
<keyword id="KW-0472">Membrane</keyword>
<keyword id="KW-1185">Reference proteome</keyword>
<keyword id="KW-0813">Transport</keyword>
<organism>
    <name type="scientific">Stenotrophomonas maltophilia (strain K279a)</name>
    <dbReference type="NCBI Taxonomy" id="522373"/>
    <lineage>
        <taxon>Bacteria</taxon>
        <taxon>Pseudomonadati</taxon>
        <taxon>Pseudomonadota</taxon>
        <taxon>Gammaproteobacteria</taxon>
        <taxon>Lysobacterales</taxon>
        <taxon>Lysobacteraceae</taxon>
        <taxon>Stenotrophomonas</taxon>
        <taxon>Stenotrophomonas maltophilia group</taxon>
    </lineage>
</organism>